<dbReference type="EC" id="2.8.1.10" evidence="1"/>
<dbReference type="EMBL" id="CP000479">
    <property type="protein sequence ID" value="ABK65849.1"/>
    <property type="molecule type" value="Genomic_DNA"/>
</dbReference>
<dbReference type="RefSeq" id="WP_009979401.1">
    <property type="nucleotide sequence ID" value="NC_008595.1"/>
</dbReference>
<dbReference type="SMR" id="A0QLT3"/>
<dbReference type="KEGG" id="mav:MAV_4744"/>
<dbReference type="HOGENOM" id="CLU_062233_1_0_11"/>
<dbReference type="UniPathway" id="UPA00060"/>
<dbReference type="Proteomes" id="UP000001574">
    <property type="component" value="Chromosome"/>
</dbReference>
<dbReference type="GO" id="GO:0005737">
    <property type="term" value="C:cytoplasm"/>
    <property type="evidence" value="ECO:0007669"/>
    <property type="project" value="UniProtKB-SubCell"/>
</dbReference>
<dbReference type="GO" id="GO:1990107">
    <property type="term" value="F:thiazole synthase activity"/>
    <property type="evidence" value="ECO:0007669"/>
    <property type="project" value="UniProtKB-EC"/>
</dbReference>
<dbReference type="GO" id="GO:0009229">
    <property type="term" value="P:thiamine diphosphate biosynthetic process"/>
    <property type="evidence" value="ECO:0007669"/>
    <property type="project" value="UniProtKB-UniRule"/>
</dbReference>
<dbReference type="CDD" id="cd04728">
    <property type="entry name" value="ThiG"/>
    <property type="match status" value="1"/>
</dbReference>
<dbReference type="Gene3D" id="3.20.20.70">
    <property type="entry name" value="Aldolase class I"/>
    <property type="match status" value="1"/>
</dbReference>
<dbReference type="HAMAP" id="MF_00443">
    <property type="entry name" value="ThiG"/>
    <property type="match status" value="1"/>
</dbReference>
<dbReference type="InterPro" id="IPR013785">
    <property type="entry name" value="Aldolase_TIM"/>
</dbReference>
<dbReference type="InterPro" id="IPR033983">
    <property type="entry name" value="Thiazole_synthase_ThiG"/>
</dbReference>
<dbReference type="InterPro" id="IPR008867">
    <property type="entry name" value="ThiG"/>
</dbReference>
<dbReference type="PANTHER" id="PTHR34266">
    <property type="entry name" value="THIAZOLE SYNTHASE"/>
    <property type="match status" value="1"/>
</dbReference>
<dbReference type="PANTHER" id="PTHR34266:SF2">
    <property type="entry name" value="THIAZOLE SYNTHASE"/>
    <property type="match status" value="1"/>
</dbReference>
<dbReference type="Pfam" id="PF05690">
    <property type="entry name" value="ThiG"/>
    <property type="match status" value="1"/>
</dbReference>
<dbReference type="SUPFAM" id="SSF110399">
    <property type="entry name" value="ThiG-like"/>
    <property type="match status" value="1"/>
</dbReference>
<feature type="chain" id="PRO_1000026011" description="Thiazole synthase">
    <location>
        <begin position="1"/>
        <end position="252"/>
    </location>
</feature>
<feature type="active site" description="Schiff-base intermediate with DXP" evidence="1">
    <location>
        <position position="98"/>
    </location>
</feature>
<feature type="binding site" evidence="1">
    <location>
        <position position="159"/>
    </location>
    <ligand>
        <name>1-deoxy-D-xylulose 5-phosphate</name>
        <dbReference type="ChEBI" id="CHEBI:57792"/>
    </ligand>
</feature>
<feature type="binding site" evidence="1">
    <location>
        <begin position="185"/>
        <end position="186"/>
    </location>
    <ligand>
        <name>1-deoxy-D-xylulose 5-phosphate</name>
        <dbReference type="ChEBI" id="CHEBI:57792"/>
    </ligand>
</feature>
<feature type="binding site" evidence="1">
    <location>
        <begin position="207"/>
        <end position="208"/>
    </location>
    <ligand>
        <name>1-deoxy-D-xylulose 5-phosphate</name>
        <dbReference type="ChEBI" id="CHEBI:57792"/>
    </ligand>
</feature>
<gene>
    <name evidence="1" type="primary">thiG</name>
    <name type="ordered locus">MAV_4744</name>
</gene>
<evidence type="ECO:0000255" key="1">
    <source>
        <dbReference type="HAMAP-Rule" id="MF_00443"/>
    </source>
</evidence>
<reference key="1">
    <citation type="submission" date="2006-10" db="EMBL/GenBank/DDBJ databases">
        <authorList>
            <person name="Fleischmann R.D."/>
            <person name="Dodson R.J."/>
            <person name="Haft D.H."/>
            <person name="Merkel J.S."/>
            <person name="Nelson W.C."/>
            <person name="Fraser C.M."/>
        </authorList>
    </citation>
    <scope>NUCLEOTIDE SEQUENCE [LARGE SCALE GENOMIC DNA]</scope>
    <source>
        <strain>104</strain>
    </source>
</reference>
<organism>
    <name type="scientific">Mycobacterium avium (strain 104)</name>
    <dbReference type="NCBI Taxonomy" id="243243"/>
    <lineage>
        <taxon>Bacteria</taxon>
        <taxon>Bacillati</taxon>
        <taxon>Actinomycetota</taxon>
        <taxon>Actinomycetes</taxon>
        <taxon>Mycobacteriales</taxon>
        <taxon>Mycobacteriaceae</taxon>
        <taxon>Mycobacterium</taxon>
        <taxon>Mycobacterium avium complex (MAC)</taxon>
    </lineage>
</organism>
<protein>
    <recommendedName>
        <fullName evidence="1">Thiazole synthase</fullName>
        <ecNumber evidence="1">2.8.1.10</ecNumber>
    </recommendedName>
</protein>
<sequence>MVDSKLTIADRSFSSRLIMGTGGAGNLAVLEEALIASGTELTTVAIRRVDAEGGTGLLDLLNRLGITPLPNTAGCRGAAEAVLTAQLAREALNTNWIKLEVIADERTLLPDAVELVRAAEQLVDDGFVVLPYTNDDPVLARRLEDAGCAAVMPLGSPIGTGLGITNPHNIEMIVAGAGVPVVLDAGIGTASDAALAMELGCDAVLLATAVTRAGDPAAMAAAMSAAVTAGYLARRAGRIPKRFWAQASSPPR</sequence>
<keyword id="KW-0963">Cytoplasm</keyword>
<keyword id="KW-0704">Schiff base</keyword>
<keyword id="KW-0784">Thiamine biosynthesis</keyword>
<keyword id="KW-0808">Transferase</keyword>
<comment type="function">
    <text evidence="1">Catalyzes the rearrangement of 1-deoxy-D-xylulose 5-phosphate (DXP) to produce the thiazole phosphate moiety of thiamine. Sulfur is provided by the thiocarboxylate moiety of the carrier protein ThiS. In vitro, sulfur can be provided by H(2)S.</text>
</comment>
<comment type="catalytic activity">
    <reaction evidence="1">
        <text>[ThiS sulfur-carrier protein]-C-terminal-Gly-aminoethanethioate + 2-iminoacetate + 1-deoxy-D-xylulose 5-phosphate = [ThiS sulfur-carrier protein]-C-terminal Gly-Gly + 2-[(2R,5Z)-2-carboxy-4-methylthiazol-5(2H)-ylidene]ethyl phosphate + 2 H2O + H(+)</text>
        <dbReference type="Rhea" id="RHEA:26297"/>
        <dbReference type="Rhea" id="RHEA-COMP:12909"/>
        <dbReference type="Rhea" id="RHEA-COMP:19908"/>
        <dbReference type="ChEBI" id="CHEBI:15377"/>
        <dbReference type="ChEBI" id="CHEBI:15378"/>
        <dbReference type="ChEBI" id="CHEBI:57792"/>
        <dbReference type="ChEBI" id="CHEBI:62899"/>
        <dbReference type="ChEBI" id="CHEBI:77846"/>
        <dbReference type="ChEBI" id="CHEBI:90778"/>
        <dbReference type="ChEBI" id="CHEBI:232372"/>
        <dbReference type="EC" id="2.8.1.10"/>
    </reaction>
</comment>
<comment type="pathway">
    <text evidence="1">Cofactor biosynthesis; thiamine diphosphate biosynthesis.</text>
</comment>
<comment type="subunit">
    <text evidence="1">Homotetramer. Forms heterodimers with either ThiH or ThiS.</text>
</comment>
<comment type="subcellular location">
    <subcellularLocation>
        <location evidence="1">Cytoplasm</location>
    </subcellularLocation>
</comment>
<comment type="similarity">
    <text evidence="1">Belongs to the ThiG family.</text>
</comment>
<name>THIG_MYCA1</name>
<proteinExistence type="inferred from homology"/>
<accession>A0QLT3</accession>